<feature type="chain" id="PRO_0000059730" description="Ig kappa chain V region 3368">
    <location>
        <begin position="1"/>
        <end position="111" status="greater than"/>
    </location>
</feature>
<feature type="region of interest" description="Framework-1">
    <location>
        <begin position="1"/>
        <end position="24"/>
    </location>
</feature>
<feature type="region of interest" description="Complementarity-determining-1">
    <location>
        <begin position="25"/>
        <end position="35"/>
    </location>
</feature>
<feature type="region of interest" description="Framework-2">
    <location>
        <begin position="36"/>
        <end position="50"/>
    </location>
</feature>
<feature type="region of interest" description="Complementarity-determining-2">
    <location>
        <begin position="51"/>
        <end position="57"/>
    </location>
</feature>
<feature type="region of interest" description="Framework-3">
    <location>
        <begin position="58"/>
        <end position="89"/>
    </location>
</feature>
<feature type="region of interest" description="Complementarity-determining-3">
    <location>
        <begin position="90"/>
        <end position="101"/>
    </location>
</feature>
<feature type="region of interest" description="Framework-4">
    <location>
        <begin position="102"/>
        <end position="111"/>
    </location>
</feature>
<feature type="non-terminal residue">
    <location>
        <position position="111"/>
    </location>
</feature>
<reference key="1">
    <citation type="journal article" date="1978" name="Biochemistry">
        <title>Light chain variable region sequence of rabbit antipneumococcal type III polysaccharide antibody 3368.</title>
        <authorList>
            <person name="Cannon L.E. III"/>
            <person name="Margolies M.N."/>
            <person name="Haber E."/>
        </authorList>
    </citation>
    <scope>PROTEIN SEQUENCE</scope>
</reference>
<organism>
    <name type="scientific">Oryctolagus cuniculus</name>
    <name type="common">Rabbit</name>
    <dbReference type="NCBI Taxonomy" id="9986"/>
    <lineage>
        <taxon>Eukaryota</taxon>
        <taxon>Metazoa</taxon>
        <taxon>Chordata</taxon>
        <taxon>Craniata</taxon>
        <taxon>Vertebrata</taxon>
        <taxon>Euteleostomi</taxon>
        <taxon>Mammalia</taxon>
        <taxon>Eutheria</taxon>
        <taxon>Euarchontoglires</taxon>
        <taxon>Glires</taxon>
        <taxon>Lagomorpha</taxon>
        <taxon>Leporidae</taxon>
        <taxon>Oryctolagus</taxon>
    </lineage>
</organism>
<sequence>ADIVMTQTPSSVSAAVGGTVTIKCQASESIGNELAWYQQKPGQPPKLLIYRASKLASGVSSRFKGSGSGTEFTLTISGVQCDDAGIYYCQQDWNSNNVVNNFGGGTEVVVK</sequence>
<name>KV12_RABIT</name>
<proteinExistence type="evidence at protein level"/>
<dbReference type="PIR" id="A01956">
    <property type="entry name" value="KVRB36"/>
</dbReference>
<dbReference type="SMR" id="P01693"/>
<dbReference type="FunCoup" id="P01693">
    <property type="interactions" value="212"/>
</dbReference>
<dbReference type="STRING" id="9986.ENSOCUP00000017386"/>
<dbReference type="InParanoid" id="P01693"/>
<dbReference type="Proteomes" id="UP000001811">
    <property type="component" value="Unplaced"/>
</dbReference>
<dbReference type="GO" id="GO:0019814">
    <property type="term" value="C:immunoglobulin complex"/>
    <property type="evidence" value="ECO:0007669"/>
    <property type="project" value="UniProtKB-KW"/>
</dbReference>
<dbReference type="GO" id="GO:0002250">
    <property type="term" value="P:adaptive immune response"/>
    <property type="evidence" value="ECO:0007669"/>
    <property type="project" value="UniProtKB-KW"/>
</dbReference>
<dbReference type="FunFam" id="2.60.40.10:FF:000212">
    <property type="entry name" value="Immunoglobulin kappa chain variable 12-38"/>
    <property type="match status" value="1"/>
</dbReference>
<dbReference type="Gene3D" id="2.60.40.10">
    <property type="entry name" value="Immunoglobulins"/>
    <property type="match status" value="1"/>
</dbReference>
<dbReference type="InterPro" id="IPR007110">
    <property type="entry name" value="Ig-like_dom"/>
</dbReference>
<dbReference type="InterPro" id="IPR036179">
    <property type="entry name" value="Ig-like_dom_sf"/>
</dbReference>
<dbReference type="InterPro" id="IPR013783">
    <property type="entry name" value="Ig-like_fold"/>
</dbReference>
<dbReference type="InterPro" id="IPR003599">
    <property type="entry name" value="Ig_sub"/>
</dbReference>
<dbReference type="InterPro" id="IPR013106">
    <property type="entry name" value="Ig_V-set"/>
</dbReference>
<dbReference type="InterPro" id="IPR050150">
    <property type="entry name" value="IgV_Light_Chain"/>
</dbReference>
<dbReference type="PANTHER" id="PTHR23267">
    <property type="entry name" value="IMMUNOGLOBULIN LIGHT CHAIN"/>
    <property type="match status" value="1"/>
</dbReference>
<dbReference type="Pfam" id="PF07686">
    <property type="entry name" value="V-set"/>
    <property type="match status" value="1"/>
</dbReference>
<dbReference type="SMART" id="SM00409">
    <property type="entry name" value="IG"/>
    <property type="match status" value="1"/>
</dbReference>
<dbReference type="SMART" id="SM00406">
    <property type="entry name" value="IGv"/>
    <property type="match status" value="1"/>
</dbReference>
<dbReference type="SUPFAM" id="SSF48726">
    <property type="entry name" value="Immunoglobulin"/>
    <property type="match status" value="1"/>
</dbReference>
<dbReference type="PROSITE" id="PS50835">
    <property type="entry name" value="IG_LIKE"/>
    <property type="match status" value="1"/>
</dbReference>
<protein>
    <recommendedName>
        <fullName>Ig kappa chain V region 3368</fullName>
    </recommendedName>
</protein>
<comment type="miscellaneous">
    <text>This chain was obtained from antibody to type III pneumococci and was isolated from the serum of a single rabbit.</text>
</comment>
<keyword id="KW-1064">Adaptive immunity</keyword>
<keyword id="KW-0903">Direct protein sequencing</keyword>
<keyword id="KW-0391">Immunity</keyword>
<keyword id="KW-1280">Immunoglobulin</keyword>
<keyword id="KW-1185">Reference proteome</keyword>
<accession>P01693</accession>